<gene>
    <name evidence="1" type="primary">tyrS</name>
    <name type="ordered locus">SPH_2288</name>
</gene>
<comment type="function">
    <text evidence="1">Catalyzes the attachment of tyrosine to tRNA(Tyr) in a two-step reaction: tyrosine is first activated by ATP to form Tyr-AMP and then transferred to the acceptor end of tRNA(Tyr).</text>
</comment>
<comment type="catalytic activity">
    <reaction evidence="1">
        <text>tRNA(Tyr) + L-tyrosine + ATP = L-tyrosyl-tRNA(Tyr) + AMP + diphosphate + H(+)</text>
        <dbReference type="Rhea" id="RHEA:10220"/>
        <dbReference type="Rhea" id="RHEA-COMP:9706"/>
        <dbReference type="Rhea" id="RHEA-COMP:9707"/>
        <dbReference type="ChEBI" id="CHEBI:15378"/>
        <dbReference type="ChEBI" id="CHEBI:30616"/>
        <dbReference type="ChEBI" id="CHEBI:33019"/>
        <dbReference type="ChEBI" id="CHEBI:58315"/>
        <dbReference type="ChEBI" id="CHEBI:78442"/>
        <dbReference type="ChEBI" id="CHEBI:78536"/>
        <dbReference type="ChEBI" id="CHEBI:456215"/>
        <dbReference type="EC" id="6.1.1.1"/>
    </reaction>
</comment>
<comment type="subunit">
    <text evidence="1">Homodimer.</text>
</comment>
<comment type="subcellular location">
    <subcellularLocation>
        <location evidence="1">Cytoplasm</location>
    </subcellularLocation>
</comment>
<comment type="similarity">
    <text evidence="1">Belongs to the class-I aminoacyl-tRNA synthetase family. TyrS type 1 subfamily.</text>
</comment>
<organism>
    <name type="scientific">Streptococcus pneumoniae (strain Hungary19A-6)</name>
    <dbReference type="NCBI Taxonomy" id="487214"/>
    <lineage>
        <taxon>Bacteria</taxon>
        <taxon>Bacillati</taxon>
        <taxon>Bacillota</taxon>
        <taxon>Bacilli</taxon>
        <taxon>Lactobacillales</taxon>
        <taxon>Streptococcaceae</taxon>
        <taxon>Streptococcus</taxon>
    </lineage>
</organism>
<name>SYY_STRPI</name>
<sequence length="418" mass="47490">MHIFDELKERGLIFQTTDEEALRKALEEGQVSYYTGYDPTADSLHLGHLVAILTSRRLQLAGHKPYALVGGATGLIGDPSFKDAERSLQTKDTVDGWVKSIQGQLSRFLDFENGENKAVMVNNYDWFGSISFIDFLRDIGKYFTVNYMMSKESVKKRIETGISYTEFAYQIMQGYDFFVLNQDHNVTLQIGGSDQWGNMTAGTELLRRKADKTGHVITVPLITDATGKKFGKSEGNAVWLNPEKTSPYEMYQFWMNVMDADAVRFLKIFTFLSLDEIEDIRKQFEAAPHERLAQKVLAREVVTLVHGEEAYKEALNITEQLFAGNIKNLSVKELKQGLRGVPNYQVQADEHNNIVELLVSSGIVNSKRQAREDVQNGAIYVNGDRIQDLDYVLSDADKLENELTVIRRGKKKYFVLTY</sequence>
<accession>B1I9G6</accession>
<reference key="1">
    <citation type="journal article" date="2010" name="Genome Biol.">
        <title>Structure and dynamics of the pan-genome of Streptococcus pneumoniae and closely related species.</title>
        <authorList>
            <person name="Donati C."/>
            <person name="Hiller N.L."/>
            <person name="Tettelin H."/>
            <person name="Muzzi A."/>
            <person name="Croucher N.J."/>
            <person name="Angiuoli S.V."/>
            <person name="Oggioni M."/>
            <person name="Dunning Hotopp J.C."/>
            <person name="Hu F.Z."/>
            <person name="Riley D.R."/>
            <person name="Covacci A."/>
            <person name="Mitchell T.J."/>
            <person name="Bentley S.D."/>
            <person name="Kilian M."/>
            <person name="Ehrlich G.D."/>
            <person name="Rappuoli R."/>
            <person name="Moxon E.R."/>
            <person name="Masignani V."/>
        </authorList>
    </citation>
    <scope>NUCLEOTIDE SEQUENCE [LARGE SCALE GENOMIC DNA]</scope>
    <source>
        <strain>Hungary19A-6</strain>
    </source>
</reference>
<evidence type="ECO:0000255" key="1">
    <source>
        <dbReference type="HAMAP-Rule" id="MF_02006"/>
    </source>
</evidence>
<keyword id="KW-0030">Aminoacyl-tRNA synthetase</keyword>
<keyword id="KW-0067">ATP-binding</keyword>
<keyword id="KW-0963">Cytoplasm</keyword>
<keyword id="KW-0436">Ligase</keyword>
<keyword id="KW-0547">Nucleotide-binding</keyword>
<keyword id="KW-0648">Protein biosynthesis</keyword>
<keyword id="KW-0694">RNA-binding</keyword>
<dbReference type="EC" id="6.1.1.1" evidence="1"/>
<dbReference type="EMBL" id="CP000936">
    <property type="protein sequence ID" value="ACA37557.1"/>
    <property type="molecule type" value="Genomic_DNA"/>
</dbReference>
<dbReference type="RefSeq" id="WP_000546881.1">
    <property type="nucleotide sequence ID" value="NC_010380.1"/>
</dbReference>
<dbReference type="SMR" id="B1I9G6"/>
<dbReference type="GeneID" id="45652666"/>
<dbReference type="KEGG" id="spv:SPH_2288"/>
<dbReference type="HOGENOM" id="CLU_024003_0_3_9"/>
<dbReference type="Proteomes" id="UP000002163">
    <property type="component" value="Chromosome"/>
</dbReference>
<dbReference type="GO" id="GO:0005829">
    <property type="term" value="C:cytosol"/>
    <property type="evidence" value="ECO:0007669"/>
    <property type="project" value="TreeGrafter"/>
</dbReference>
<dbReference type="GO" id="GO:0005524">
    <property type="term" value="F:ATP binding"/>
    <property type="evidence" value="ECO:0007669"/>
    <property type="project" value="UniProtKB-UniRule"/>
</dbReference>
<dbReference type="GO" id="GO:0003723">
    <property type="term" value="F:RNA binding"/>
    <property type="evidence" value="ECO:0007669"/>
    <property type="project" value="UniProtKB-KW"/>
</dbReference>
<dbReference type="GO" id="GO:0004831">
    <property type="term" value="F:tyrosine-tRNA ligase activity"/>
    <property type="evidence" value="ECO:0007669"/>
    <property type="project" value="UniProtKB-UniRule"/>
</dbReference>
<dbReference type="GO" id="GO:0006437">
    <property type="term" value="P:tyrosyl-tRNA aminoacylation"/>
    <property type="evidence" value="ECO:0007669"/>
    <property type="project" value="UniProtKB-UniRule"/>
</dbReference>
<dbReference type="CDD" id="cd00165">
    <property type="entry name" value="S4"/>
    <property type="match status" value="1"/>
</dbReference>
<dbReference type="CDD" id="cd00805">
    <property type="entry name" value="TyrRS_core"/>
    <property type="match status" value="1"/>
</dbReference>
<dbReference type="FunFam" id="1.10.240.10:FF:000001">
    <property type="entry name" value="Tyrosine--tRNA ligase"/>
    <property type="match status" value="1"/>
</dbReference>
<dbReference type="FunFam" id="3.10.290.10:FF:000012">
    <property type="entry name" value="Tyrosine--tRNA ligase"/>
    <property type="match status" value="1"/>
</dbReference>
<dbReference type="FunFam" id="3.40.50.620:FF:000008">
    <property type="entry name" value="Tyrosine--tRNA ligase"/>
    <property type="match status" value="1"/>
</dbReference>
<dbReference type="Gene3D" id="3.40.50.620">
    <property type="entry name" value="HUPs"/>
    <property type="match status" value="1"/>
</dbReference>
<dbReference type="Gene3D" id="3.10.290.10">
    <property type="entry name" value="RNA-binding S4 domain"/>
    <property type="match status" value="1"/>
</dbReference>
<dbReference type="Gene3D" id="1.10.240.10">
    <property type="entry name" value="Tyrosyl-Transfer RNA Synthetase"/>
    <property type="match status" value="1"/>
</dbReference>
<dbReference type="HAMAP" id="MF_02006">
    <property type="entry name" value="Tyr_tRNA_synth_type1"/>
    <property type="match status" value="1"/>
</dbReference>
<dbReference type="InterPro" id="IPR001412">
    <property type="entry name" value="aa-tRNA-synth_I_CS"/>
</dbReference>
<dbReference type="InterPro" id="IPR002305">
    <property type="entry name" value="aa-tRNA-synth_Ic"/>
</dbReference>
<dbReference type="InterPro" id="IPR014729">
    <property type="entry name" value="Rossmann-like_a/b/a_fold"/>
</dbReference>
<dbReference type="InterPro" id="IPR002942">
    <property type="entry name" value="S4_RNA-bd"/>
</dbReference>
<dbReference type="InterPro" id="IPR036986">
    <property type="entry name" value="S4_RNA-bd_sf"/>
</dbReference>
<dbReference type="InterPro" id="IPR054608">
    <property type="entry name" value="SYY-like_C"/>
</dbReference>
<dbReference type="InterPro" id="IPR002307">
    <property type="entry name" value="Tyr-tRNA-ligase"/>
</dbReference>
<dbReference type="InterPro" id="IPR024088">
    <property type="entry name" value="Tyr-tRNA-ligase_bac-type"/>
</dbReference>
<dbReference type="InterPro" id="IPR024107">
    <property type="entry name" value="Tyr-tRNA-ligase_bac_1"/>
</dbReference>
<dbReference type="NCBIfam" id="TIGR00234">
    <property type="entry name" value="tyrS"/>
    <property type="match status" value="1"/>
</dbReference>
<dbReference type="PANTHER" id="PTHR11766:SF0">
    <property type="entry name" value="TYROSINE--TRNA LIGASE, MITOCHONDRIAL"/>
    <property type="match status" value="1"/>
</dbReference>
<dbReference type="PANTHER" id="PTHR11766">
    <property type="entry name" value="TYROSYL-TRNA SYNTHETASE"/>
    <property type="match status" value="1"/>
</dbReference>
<dbReference type="Pfam" id="PF22421">
    <property type="entry name" value="SYY_C-terminal"/>
    <property type="match status" value="1"/>
</dbReference>
<dbReference type="Pfam" id="PF00579">
    <property type="entry name" value="tRNA-synt_1b"/>
    <property type="match status" value="1"/>
</dbReference>
<dbReference type="PRINTS" id="PR01040">
    <property type="entry name" value="TRNASYNTHTYR"/>
</dbReference>
<dbReference type="SMART" id="SM00363">
    <property type="entry name" value="S4"/>
    <property type="match status" value="1"/>
</dbReference>
<dbReference type="SUPFAM" id="SSF55174">
    <property type="entry name" value="Alpha-L RNA-binding motif"/>
    <property type="match status" value="1"/>
</dbReference>
<dbReference type="SUPFAM" id="SSF52374">
    <property type="entry name" value="Nucleotidylyl transferase"/>
    <property type="match status" value="1"/>
</dbReference>
<dbReference type="PROSITE" id="PS00178">
    <property type="entry name" value="AA_TRNA_LIGASE_I"/>
    <property type="match status" value="1"/>
</dbReference>
<dbReference type="PROSITE" id="PS50889">
    <property type="entry name" value="S4"/>
    <property type="match status" value="1"/>
</dbReference>
<feature type="chain" id="PRO_1000189337" description="Tyrosine--tRNA ligase">
    <location>
        <begin position="1"/>
        <end position="418"/>
    </location>
</feature>
<feature type="domain" description="S4 RNA-binding" evidence="1">
    <location>
        <begin position="352"/>
        <end position="418"/>
    </location>
</feature>
<feature type="short sequence motif" description="'HIGH' region">
    <location>
        <begin position="39"/>
        <end position="48"/>
    </location>
</feature>
<feature type="short sequence motif" description="'KMSKS' region">
    <location>
        <begin position="229"/>
        <end position="233"/>
    </location>
</feature>
<feature type="binding site" evidence="1">
    <location>
        <position position="34"/>
    </location>
    <ligand>
        <name>L-tyrosine</name>
        <dbReference type="ChEBI" id="CHEBI:58315"/>
    </ligand>
</feature>
<feature type="binding site" evidence="1">
    <location>
        <position position="169"/>
    </location>
    <ligand>
        <name>L-tyrosine</name>
        <dbReference type="ChEBI" id="CHEBI:58315"/>
    </ligand>
</feature>
<feature type="binding site" evidence="1">
    <location>
        <position position="173"/>
    </location>
    <ligand>
        <name>L-tyrosine</name>
        <dbReference type="ChEBI" id="CHEBI:58315"/>
    </ligand>
</feature>
<feature type="binding site" evidence="1">
    <location>
        <position position="232"/>
    </location>
    <ligand>
        <name>ATP</name>
        <dbReference type="ChEBI" id="CHEBI:30616"/>
    </ligand>
</feature>
<protein>
    <recommendedName>
        <fullName evidence="1">Tyrosine--tRNA ligase</fullName>
        <ecNumber evidence="1">6.1.1.1</ecNumber>
    </recommendedName>
    <alternativeName>
        <fullName evidence="1">Tyrosyl-tRNA synthetase</fullName>
        <shortName evidence="1">TyrRS</shortName>
    </alternativeName>
</protein>
<proteinExistence type="inferred from homology"/>